<sequence>MIQQMQMPEKLEVDEASYSNYYGKFIAQPLERGYGVTIGNAIRRVLLSSLPGTAITGIKIEGVLHEFSTIDGVKEDVPDIVLNLKQIRFRSISKRNAVVTLVLRGPKDFVAGDIVSPEGDFEVLNPEHHIATLNEDATLKIDVSVGRGRGYMPAEDNKPETMPIGYISVDSIFTPIRNVKYSVENTRVGQRTDYEKLSLEVETDGSIAPDEAVSMAGKIINDHVRLFSLFSPTQEEEVEEEVQQEDEEFENMRKLLMTRIEDLELSVRSHNCLRSAEIDTLGQLVSKREDELLGYKNFGKKSLAELKELLESKNLSFGMEVTKYRLNQ</sequence>
<reference key="1">
    <citation type="submission" date="2008-06" db="EMBL/GenBank/DDBJ databases">
        <title>Complete sequence of Chloroherpeton thalassium ATCC 35110.</title>
        <authorList>
            <consortium name="US DOE Joint Genome Institute"/>
            <person name="Lucas S."/>
            <person name="Copeland A."/>
            <person name="Lapidus A."/>
            <person name="Glavina del Rio T."/>
            <person name="Dalin E."/>
            <person name="Tice H."/>
            <person name="Bruce D."/>
            <person name="Goodwin L."/>
            <person name="Pitluck S."/>
            <person name="Schmutz J."/>
            <person name="Larimer F."/>
            <person name="Land M."/>
            <person name="Hauser L."/>
            <person name="Kyrpides N."/>
            <person name="Mikhailova N."/>
            <person name="Liu Z."/>
            <person name="Li T."/>
            <person name="Zhao F."/>
            <person name="Overmann J."/>
            <person name="Bryant D.A."/>
            <person name="Richardson P."/>
        </authorList>
    </citation>
    <scope>NUCLEOTIDE SEQUENCE [LARGE SCALE GENOMIC DNA]</scope>
    <source>
        <strain>ATCC 35110 / GB-78</strain>
    </source>
</reference>
<evidence type="ECO:0000255" key="1">
    <source>
        <dbReference type="HAMAP-Rule" id="MF_00059"/>
    </source>
</evidence>
<gene>
    <name evidence="1" type="primary">rpoA</name>
    <name type="ordered locus">Ctha_1114</name>
</gene>
<dbReference type="EC" id="2.7.7.6" evidence="1"/>
<dbReference type="EMBL" id="CP001100">
    <property type="protein sequence ID" value="ACF13578.1"/>
    <property type="molecule type" value="Genomic_DNA"/>
</dbReference>
<dbReference type="RefSeq" id="WP_012499662.1">
    <property type="nucleotide sequence ID" value="NC_011026.1"/>
</dbReference>
<dbReference type="SMR" id="B3QYF0"/>
<dbReference type="STRING" id="517418.Ctha_1114"/>
<dbReference type="KEGG" id="cts:Ctha_1114"/>
<dbReference type="eggNOG" id="COG0202">
    <property type="taxonomic scope" value="Bacteria"/>
</dbReference>
<dbReference type="HOGENOM" id="CLU_053084_0_1_10"/>
<dbReference type="OrthoDB" id="9805706at2"/>
<dbReference type="Proteomes" id="UP000001208">
    <property type="component" value="Chromosome"/>
</dbReference>
<dbReference type="GO" id="GO:0005737">
    <property type="term" value="C:cytoplasm"/>
    <property type="evidence" value="ECO:0007669"/>
    <property type="project" value="UniProtKB-ARBA"/>
</dbReference>
<dbReference type="GO" id="GO:0000428">
    <property type="term" value="C:DNA-directed RNA polymerase complex"/>
    <property type="evidence" value="ECO:0007669"/>
    <property type="project" value="UniProtKB-KW"/>
</dbReference>
<dbReference type="GO" id="GO:0003677">
    <property type="term" value="F:DNA binding"/>
    <property type="evidence" value="ECO:0007669"/>
    <property type="project" value="UniProtKB-UniRule"/>
</dbReference>
<dbReference type="GO" id="GO:0003899">
    <property type="term" value="F:DNA-directed RNA polymerase activity"/>
    <property type="evidence" value="ECO:0007669"/>
    <property type="project" value="UniProtKB-UniRule"/>
</dbReference>
<dbReference type="GO" id="GO:0046983">
    <property type="term" value="F:protein dimerization activity"/>
    <property type="evidence" value="ECO:0007669"/>
    <property type="project" value="InterPro"/>
</dbReference>
<dbReference type="GO" id="GO:0006351">
    <property type="term" value="P:DNA-templated transcription"/>
    <property type="evidence" value="ECO:0007669"/>
    <property type="project" value="UniProtKB-UniRule"/>
</dbReference>
<dbReference type="CDD" id="cd06928">
    <property type="entry name" value="RNAP_alpha_NTD"/>
    <property type="match status" value="1"/>
</dbReference>
<dbReference type="FunFam" id="2.170.120.12:FF:000001">
    <property type="entry name" value="DNA-directed RNA polymerase subunit alpha"/>
    <property type="match status" value="1"/>
</dbReference>
<dbReference type="Gene3D" id="1.10.150.20">
    <property type="entry name" value="5' to 3' exonuclease, C-terminal subdomain"/>
    <property type="match status" value="1"/>
</dbReference>
<dbReference type="Gene3D" id="2.170.120.12">
    <property type="entry name" value="DNA-directed RNA polymerase, insert domain"/>
    <property type="match status" value="1"/>
</dbReference>
<dbReference type="Gene3D" id="3.30.1360.10">
    <property type="entry name" value="RNA polymerase, RBP11-like subunit"/>
    <property type="match status" value="1"/>
</dbReference>
<dbReference type="HAMAP" id="MF_00059">
    <property type="entry name" value="RNApol_bact_RpoA"/>
    <property type="match status" value="1"/>
</dbReference>
<dbReference type="InterPro" id="IPR011262">
    <property type="entry name" value="DNA-dir_RNA_pol_insert"/>
</dbReference>
<dbReference type="InterPro" id="IPR011263">
    <property type="entry name" value="DNA-dir_RNA_pol_RpoA/D/Rpb3"/>
</dbReference>
<dbReference type="InterPro" id="IPR011773">
    <property type="entry name" value="DNA-dir_RpoA"/>
</dbReference>
<dbReference type="InterPro" id="IPR036603">
    <property type="entry name" value="RBP11-like"/>
</dbReference>
<dbReference type="InterPro" id="IPR011260">
    <property type="entry name" value="RNAP_asu_C"/>
</dbReference>
<dbReference type="InterPro" id="IPR036643">
    <property type="entry name" value="RNApol_insert_sf"/>
</dbReference>
<dbReference type="NCBIfam" id="NF003513">
    <property type="entry name" value="PRK05182.1-2"/>
    <property type="match status" value="1"/>
</dbReference>
<dbReference type="NCBIfam" id="NF003516">
    <property type="entry name" value="PRK05182.2-2"/>
    <property type="match status" value="1"/>
</dbReference>
<dbReference type="NCBIfam" id="NF003519">
    <property type="entry name" value="PRK05182.2-5"/>
    <property type="match status" value="1"/>
</dbReference>
<dbReference type="NCBIfam" id="TIGR02027">
    <property type="entry name" value="rpoA"/>
    <property type="match status" value="1"/>
</dbReference>
<dbReference type="Pfam" id="PF01000">
    <property type="entry name" value="RNA_pol_A_bac"/>
    <property type="match status" value="1"/>
</dbReference>
<dbReference type="Pfam" id="PF03118">
    <property type="entry name" value="RNA_pol_A_CTD"/>
    <property type="match status" value="1"/>
</dbReference>
<dbReference type="Pfam" id="PF01193">
    <property type="entry name" value="RNA_pol_L"/>
    <property type="match status" value="1"/>
</dbReference>
<dbReference type="SMART" id="SM00662">
    <property type="entry name" value="RPOLD"/>
    <property type="match status" value="1"/>
</dbReference>
<dbReference type="SUPFAM" id="SSF47789">
    <property type="entry name" value="C-terminal domain of RNA polymerase alpha subunit"/>
    <property type="match status" value="1"/>
</dbReference>
<dbReference type="SUPFAM" id="SSF56553">
    <property type="entry name" value="Insert subdomain of RNA polymerase alpha subunit"/>
    <property type="match status" value="1"/>
</dbReference>
<dbReference type="SUPFAM" id="SSF55257">
    <property type="entry name" value="RBP11-like subunits of RNA polymerase"/>
    <property type="match status" value="1"/>
</dbReference>
<feature type="chain" id="PRO_1000091936" description="DNA-directed RNA polymerase subunit alpha">
    <location>
        <begin position="1"/>
        <end position="328"/>
    </location>
</feature>
<feature type="region of interest" description="Alpha N-terminal domain (alpha-NTD)" evidence="1">
    <location>
        <begin position="1"/>
        <end position="231"/>
    </location>
</feature>
<feature type="region of interest" description="Alpha C-terminal domain (alpha-CTD)" evidence="1">
    <location>
        <begin position="252"/>
        <end position="328"/>
    </location>
</feature>
<keyword id="KW-0240">DNA-directed RNA polymerase</keyword>
<keyword id="KW-0548">Nucleotidyltransferase</keyword>
<keyword id="KW-1185">Reference proteome</keyword>
<keyword id="KW-0804">Transcription</keyword>
<keyword id="KW-0808">Transferase</keyword>
<comment type="function">
    <text evidence="1">DNA-dependent RNA polymerase catalyzes the transcription of DNA into RNA using the four ribonucleoside triphosphates as substrates.</text>
</comment>
<comment type="catalytic activity">
    <reaction evidence="1">
        <text>RNA(n) + a ribonucleoside 5'-triphosphate = RNA(n+1) + diphosphate</text>
        <dbReference type="Rhea" id="RHEA:21248"/>
        <dbReference type="Rhea" id="RHEA-COMP:14527"/>
        <dbReference type="Rhea" id="RHEA-COMP:17342"/>
        <dbReference type="ChEBI" id="CHEBI:33019"/>
        <dbReference type="ChEBI" id="CHEBI:61557"/>
        <dbReference type="ChEBI" id="CHEBI:140395"/>
        <dbReference type="EC" id="2.7.7.6"/>
    </reaction>
</comment>
<comment type="subunit">
    <text evidence="1">Homodimer. The RNAP catalytic core consists of 2 alpha, 1 beta, 1 beta' and 1 omega subunit. When a sigma factor is associated with the core the holoenzyme is formed, which can initiate transcription.</text>
</comment>
<comment type="domain">
    <text evidence="1">The N-terminal domain is essential for RNAP assembly and basal transcription, whereas the C-terminal domain is involved in interaction with transcriptional regulators and with upstream promoter elements.</text>
</comment>
<comment type="similarity">
    <text evidence="1">Belongs to the RNA polymerase alpha chain family.</text>
</comment>
<organism>
    <name type="scientific">Chloroherpeton thalassium (strain ATCC 35110 / GB-78)</name>
    <dbReference type="NCBI Taxonomy" id="517418"/>
    <lineage>
        <taxon>Bacteria</taxon>
        <taxon>Pseudomonadati</taxon>
        <taxon>Chlorobiota</taxon>
        <taxon>Chlorobiia</taxon>
        <taxon>Chlorobiales</taxon>
        <taxon>Chloroherpetonaceae</taxon>
        <taxon>Chloroherpeton</taxon>
    </lineage>
</organism>
<name>RPOA_CHLT3</name>
<protein>
    <recommendedName>
        <fullName evidence="1">DNA-directed RNA polymerase subunit alpha</fullName>
        <shortName evidence="1">RNAP subunit alpha</shortName>
        <ecNumber evidence="1">2.7.7.6</ecNumber>
    </recommendedName>
    <alternativeName>
        <fullName evidence="1">RNA polymerase subunit alpha</fullName>
    </alternativeName>
    <alternativeName>
        <fullName evidence="1">Transcriptase subunit alpha</fullName>
    </alternativeName>
</protein>
<accession>B3QYF0</accession>
<proteinExistence type="inferred from homology"/>